<protein>
    <recommendedName>
        <fullName>Glycoprotein</fullName>
    </recommendedName>
</protein>
<sequence>MSILVIILILPILFGEVPPVNSGRVVDLNRNVRTDDHPTDLYPLYECGKQDTAVPISSWYGACRGSCSITRNTTDNTMEIFFRNDSVGWIDVLSLQTSPIRKNSHVTWYGECEKSSDVSSARPAPSEIIDTVAPAILDKMDTWPYGGAVFIYDTIDFPECKYTSDYSRSGWRIMVSKRSLELKSDISGEGYIIDPDLGFYFPISKGKGLGRFWWIWQQNSLSQQGCYFKTAGVVNCTLLLDTYTYSCPGINVAFSARIGNHLTSSCVGEVNISTDGITYKLHNQVSVGSISNQLISLWHQSEEALIQQLIIVINDALGKIESSYCESTCDLTEIAMSKHSDHPLVIETPVGPWLPASKGGEFVVIPCQSEPNLVVMTPIETCLSPFLIKVKSLKTGEVYWWMPTESHVSPDRQCLGHEEEELYLKSTQRKPLQFEFWKGAYIIDYPYNGSGRWIMNPGGFIHRSSKWFPSLTELSYTAPISLPTITEGVDKKVHQVIMSVGDIGNTTGSXWFAWMQPLGDKLARAVGSVASSLLIWWTTLEEEVKHGVIIVFFTVIGLIIAVPTLKMLLKGRRPYEPVKSPVVWGGPR</sequence>
<name>GLYCO_TAVCV</name>
<reference key="1">
    <citation type="journal article" date="2005" name="J. Gen. Virol.">
        <title>Taro vein chlorosis virus: characterization and variability of a new nucleorhabdovirus.</title>
        <authorList>
            <person name="Revill P."/>
            <person name="Trinh X."/>
            <person name="Dale J."/>
            <person name="Harding R."/>
        </authorList>
    </citation>
    <scope>NUCLEOTIDE SEQUENCE [GENOMIC RNA]</scope>
</reference>
<organism>
    <name type="scientific">Taro vein chlorosis virus</name>
    <name type="common">TAVCV</name>
    <dbReference type="NCBI Taxonomy" id="2749935"/>
    <lineage>
        <taxon>Viruses</taxon>
        <taxon>Riboviria</taxon>
        <taxon>Orthornavirae</taxon>
        <taxon>Negarnaviricota</taxon>
        <taxon>Haploviricotina</taxon>
        <taxon>Monjiviricetes</taxon>
        <taxon>Mononegavirales</taxon>
        <taxon>Rhabdoviridae</taxon>
        <taxon>Betarhabdovirinae</taxon>
        <taxon>Alphanucleorhabdovirus</taxon>
    </lineage>
</organism>
<comment type="function">
    <text evidence="1">Attaches the virus to host cellular receptor, inducing endocytosis of the virion. In the endosome, the acidic pH induces conformational changes in the glycoprotein trimer, which trigger fusion between virus and cell membrane (By similarity).</text>
</comment>
<comment type="subunit">
    <text evidence="1">Homotrimer. Interacts with matrix protein (By similarity).</text>
</comment>
<comment type="subcellular location">
    <subcellularLocation>
        <location evidence="1">Virion membrane</location>
        <topology evidence="1">Single-pass type I membrane protein</topology>
    </subcellularLocation>
</comment>
<comment type="PTM">
    <text evidence="1">Glycosylated by host. Glycosylation is crucial for glycoprotein export at the cell surface (By similarity).</text>
</comment>
<comment type="similarity">
    <text evidence="3">Belongs to the nucleorhabdovirus glycoprotein family.</text>
</comment>
<feature type="signal peptide" evidence="2">
    <location>
        <begin position="1"/>
        <end position="22"/>
    </location>
</feature>
<feature type="chain" id="PRO_0000299237" description="Glycoprotein">
    <location>
        <begin position="23"/>
        <end position="588"/>
    </location>
</feature>
<feature type="topological domain" description="Virion surface" evidence="2">
    <location>
        <begin position="23"/>
        <end position="547"/>
    </location>
</feature>
<feature type="transmembrane region" description="Helical" evidence="2">
    <location>
        <begin position="548"/>
        <end position="568"/>
    </location>
</feature>
<feature type="topological domain" description="Intravirion" evidence="2">
    <location>
        <begin position="569"/>
        <end position="588"/>
    </location>
</feature>
<accession>Q5GA86</accession>
<evidence type="ECO:0000250" key="1"/>
<evidence type="ECO:0000255" key="2"/>
<evidence type="ECO:0000305" key="3"/>
<organismHost>
    <name type="scientific">Colocasia esculenta</name>
    <name type="common">Wild taro</name>
    <name type="synonym">Arum esculentum</name>
    <dbReference type="NCBI Taxonomy" id="4460"/>
</organismHost>
<keyword id="KW-0325">Glycoprotein</keyword>
<keyword id="KW-0945">Host-virus interaction</keyword>
<keyword id="KW-0472">Membrane</keyword>
<keyword id="KW-1185">Reference proteome</keyword>
<keyword id="KW-0732">Signal</keyword>
<keyword id="KW-0812">Transmembrane</keyword>
<keyword id="KW-1133">Transmembrane helix</keyword>
<keyword id="KW-1161">Viral attachment to host cell</keyword>
<keyword id="KW-0261">Viral envelope protein</keyword>
<keyword id="KW-0946">Virion</keyword>
<keyword id="KW-1160">Virus entry into host cell</keyword>
<proteinExistence type="inferred from homology"/>
<dbReference type="EMBL" id="AY674964">
    <property type="protein sequence ID" value="AAV92086.1"/>
    <property type="molecule type" value="Genomic_RNA"/>
</dbReference>
<dbReference type="KEGG" id="vg:5076499"/>
<dbReference type="OrthoDB" id="4323at10239"/>
<dbReference type="Proteomes" id="UP000007540">
    <property type="component" value="Segment"/>
</dbReference>
<dbReference type="GO" id="GO:0016020">
    <property type="term" value="C:membrane"/>
    <property type="evidence" value="ECO:0007669"/>
    <property type="project" value="UniProtKB-KW"/>
</dbReference>
<dbReference type="GO" id="GO:0019031">
    <property type="term" value="C:viral envelope"/>
    <property type="evidence" value="ECO:0007669"/>
    <property type="project" value="UniProtKB-KW"/>
</dbReference>
<dbReference type="GO" id="GO:0055036">
    <property type="term" value="C:virion membrane"/>
    <property type="evidence" value="ECO:0007669"/>
    <property type="project" value="UniProtKB-SubCell"/>
</dbReference>
<dbReference type="GO" id="GO:0046718">
    <property type="term" value="P:symbiont entry into host cell"/>
    <property type="evidence" value="ECO:0007669"/>
    <property type="project" value="UniProtKB-KW"/>
</dbReference>
<dbReference type="GO" id="GO:0019062">
    <property type="term" value="P:virion attachment to host cell"/>
    <property type="evidence" value="ECO:0007669"/>
    <property type="project" value="UniProtKB-KW"/>
</dbReference>
<gene>
    <name type="primary">G</name>
</gene>